<name>SUCC_ACIET</name>
<reference key="1">
    <citation type="submission" date="2009-01" db="EMBL/GenBank/DDBJ databases">
        <title>Complete sequence of Diaphorobacter sp. TPSY.</title>
        <authorList>
            <consortium name="US DOE Joint Genome Institute"/>
            <person name="Lucas S."/>
            <person name="Copeland A."/>
            <person name="Lapidus A."/>
            <person name="Glavina del Rio T."/>
            <person name="Tice H."/>
            <person name="Bruce D."/>
            <person name="Goodwin L."/>
            <person name="Pitluck S."/>
            <person name="Chertkov O."/>
            <person name="Brettin T."/>
            <person name="Detter J.C."/>
            <person name="Han C."/>
            <person name="Larimer F."/>
            <person name="Land M."/>
            <person name="Hauser L."/>
            <person name="Kyrpides N."/>
            <person name="Mikhailova N."/>
            <person name="Coates J.D."/>
        </authorList>
    </citation>
    <scope>NUCLEOTIDE SEQUENCE [LARGE SCALE GENOMIC DNA]</scope>
    <source>
        <strain>TPSY</strain>
    </source>
</reference>
<comment type="function">
    <text evidence="1">Succinyl-CoA synthetase functions in the citric acid cycle (TCA), coupling the hydrolysis of succinyl-CoA to the synthesis of either ATP or GTP and thus represents the only step of substrate-level phosphorylation in the TCA. The beta subunit provides nucleotide specificity of the enzyme and binds the substrate succinate, while the binding sites for coenzyme A and phosphate are found in the alpha subunit.</text>
</comment>
<comment type="catalytic activity">
    <reaction evidence="1">
        <text>succinate + ATP + CoA = succinyl-CoA + ADP + phosphate</text>
        <dbReference type="Rhea" id="RHEA:17661"/>
        <dbReference type="ChEBI" id="CHEBI:30031"/>
        <dbReference type="ChEBI" id="CHEBI:30616"/>
        <dbReference type="ChEBI" id="CHEBI:43474"/>
        <dbReference type="ChEBI" id="CHEBI:57287"/>
        <dbReference type="ChEBI" id="CHEBI:57292"/>
        <dbReference type="ChEBI" id="CHEBI:456216"/>
        <dbReference type="EC" id="6.2.1.5"/>
    </reaction>
    <physiologicalReaction direction="right-to-left" evidence="1">
        <dbReference type="Rhea" id="RHEA:17663"/>
    </physiologicalReaction>
</comment>
<comment type="catalytic activity">
    <reaction evidence="1">
        <text>GTP + succinate + CoA = succinyl-CoA + GDP + phosphate</text>
        <dbReference type="Rhea" id="RHEA:22120"/>
        <dbReference type="ChEBI" id="CHEBI:30031"/>
        <dbReference type="ChEBI" id="CHEBI:37565"/>
        <dbReference type="ChEBI" id="CHEBI:43474"/>
        <dbReference type="ChEBI" id="CHEBI:57287"/>
        <dbReference type="ChEBI" id="CHEBI:57292"/>
        <dbReference type="ChEBI" id="CHEBI:58189"/>
    </reaction>
    <physiologicalReaction direction="right-to-left" evidence="1">
        <dbReference type="Rhea" id="RHEA:22122"/>
    </physiologicalReaction>
</comment>
<comment type="cofactor">
    <cofactor evidence="1">
        <name>Mg(2+)</name>
        <dbReference type="ChEBI" id="CHEBI:18420"/>
    </cofactor>
    <text evidence="1">Binds 1 Mg(2+) ion per subunit.</text>
</comment>
<comment type="pathway">
    <text evidence="1">Carbohydrate metabolism; tricarboxylic acid cycle; succinate from succinyl-CoA (ligase route): step 1/1.</text>
</comment>
<comment type="subunit">
    <text evidence="1">Heterotetramer of two alpha and two beta subunits.</text>
</comment>
<comment type="similarity">
    <text evidence="1">Belongs to the succinate/malate CoA ligase beta subunit family.</text>
</comment>
<gene>
    <name evidence="1" type="primary">sucC</name>
    <name type="ordered locus">Dtpsy_3392</name>
</gene>
<sequence length="386" mass="41051">MKIHEYQGKEILRSFGVPVPRGIPAFTVQEAVEAAQKLGGPVWVVKAQIHAGGRGKGGGVKVAKTIDDVKARASEILGMQLVTHQTGPEGQKVRRLYIEDGADIKNELYVSLVTDRGTQKVALIASSEGGMDIEEVAHSTPEKIITEMIDPLTGITPEQSKKVAAAIGLTGASVDQAVDLFAKLYKCYMDTDASLVEINPLNCDSKGNLMALDAKFNFDANALFRHPEIVALRDLDEEDPAEVEASKFDLAYISLDGNIGCLVNGAGLAMATMDTIKLFGGEPANFLDVGGGATPEKVTEAFKIMLKNPKVKGILVNIFGGIMKCDTIATGVITACKAVNLQVPLVVRMKGTNEELGKKMLAESGLPIISADTMAEAATKIVEAVR</sequence>
<feature type="chain" id="PRO_1000197703" description="Succinate--CoA ligase [ADP-forming] subunit beta">
    <location>
        <begin position="1"/>
        <end position="386"/>
    </location>
</feature>
<feature type="domain" description="ATP-grasp" evidence="1">
    <location>
        <begin position="9"/>
        <end position="244"/>
    </location>
</feature>
<feature type="binding site" evidence="1">
    <location>
        <position position="46"/>
    </location>
    <ligand>
        <name>ATP</name>
        <dbReference type="ChEBI" id="CHEBI:30616"/>
    </ligand>
</feature>
<feature type="binding site" evidence="1">
    <location>
        <begin position="53"/>
        <end position="55"/>
    </location>
    <ligand>
        <name>ATP</name>
        <dbReference type="ChEBI" id="CHEBI:30616"/>
    </ligand>
</feature>
<feature type="binding site" evidence="1">
    <location>
        <position position="99"/>
    </location>
    <ligand>
        <name>ATP</name>
        <dbReference type="ChEBI" id="CHEBI:30616"/>
    </ligand>
</feature>
<feature type="binding site" evidence="1">
    <location>
        <position position="102"/>
    </location>
    <ligand>
        <name>ATP</name>
        <dbReference type="ChEBI" id="CHEBI:30616"/>
    </ligand>
</feature>
<feature type="binding site" evidence="1">
    <location>
        <position position="107"/>
    </location>
    <ligand>
        <name>ATP</name>
        <dbReference type="ChEBI" id="CHEBI:30616"/>
    </ligand>
</feature>
<feature type="binding site" evidence="1">
    <location>
        <position position="199"/>
    </location>
    <ligand>
        <name>Mg(2+)</name>
        <dbReference type="ChEBI" id="CHEBI:18420"/>
    </ligand>
</feature>
<feature type="binding site" evidence="1">
    <location>
        <position position="213"/>
    </location>
    <ligand>
        <name>Mg(2+)</name>
        <dbReference type="ChEBI" id="CHEBI:18420"/>
    </ligand>
</feature>
<feature type="binding site" evidence="1">
    <location>
        <position position="264"/>
    </location>
    <ligand>
        <name>substrate</name>
        <note>ligand shared with subunit alpha</note>
    </ligand>
</feature>
<feature type="binding site" evidence="1">
    <location>
        <begin position="321"/>
        <end position="323"/>
    </location>
    <ligand>
        <name>substrate</name>
        <note>ligand shared with subunit alpha</note>
    </ligand>
</feature>
<dbReference type="EC" id="6.2.1.5" evidence="1"/>
<dbReference type="EMBL" id="CP001392">
    <property type="protein sequence ID" value="ACM34819.1"/>
    <property type="molecule type" value="Genomic_DNA"/>
</dbReference>
<dbReference type="RefSeq" id="WP_011807128.1">
    <property type="nucleotide sequence ID" value="NC_011992.1"/>
</dbReference>
<dbReference type="SMR" id="B9MHW0"/>
<dbReference type="GeneID" id="84683589"/>
<dbReference type="KEGG" id="dia:Dtpsy_3392"/>
<dbReference type="eggNOG" id="COG0045">
    <property type="taxonomic scope" value="Bacteria"/>
</dbReference>
<dbReference type="HOGENOM" id="CLU_037430_0_2_4"/>
<dbReference type="UniPathway" id="UPA00223">
    <property type="reaction ID" value="UER00999"/>
</dbReference>
<dbReference type="Proteomes" id="UP000000450">
    <property type="component" value="Chromosome"/>
</dbReference>
<dbReference type="GO" id="GO:0005829">
    <property type="term" value="C:cytosol"/>
    <property type="evidence" value="ECO:0007669"/>
    <property type="project" value="TreeGrafter"/>
</dbReference>
<dbReference type="GO" id="GO:0042709">
    <property type="term" value="C:succinate-CoA ligase complex"/>
    <property type="evidence" value="ECO:0007669"/>
    <property type="project" value="TreeGrafter"/>
</dbReference>
<dbReference type="GO" id="GO:0005524">
    <property type="term" value="F:ATP binding"/>
    <property type="evidence" value="ECO:0007669"/>
    <property type="project" value="UniProtKB-UniRule"/>
</dbReference>
<dbReference type="GO" id="GO:0000287">
    <property type="term" value="F:magnesium ion binding"/>
    <property type="evidence" value="ECO:0007669"/>
    <property type="project" value="UniProtKB-UniRule"/>
</dbReference>
<dbReference type="GO" id="GO:0004775">
    <property type="term" value="F:succinate-CoA ligase (ADP-forming) activity"/>
    <property type="evidence" value="ECO:0007669"/>
    <property type="project" value="UniProtKB-UniRule"/>
</dbReference>
<dbReference type="GO" id="GO:0004776">
    <property type="term" value="F:succinate-CoA ligase (GDP-forming) activity"/>
    <property type="evidence" value="ECO:0007669"/>
    <property type="project" value="RHEA"/>
</dbReference>
<dbReference type="GO" id="GO:0006104">
    <property type="term" value="P:succinyl-CoA metabolic process"/>
    <property type="evidence" value="ECO:0007669"/>
    <property type="project" value="TreeGrafter"/>
</dbReference>
<dbReference type="GO" id="GO:0006099">
    <property type="term" value="P:tricarboxylic acid cycle"/>
    <property type="evidence" value="ECO:0007669"/>
    <property type="project" value="UniProtKB-UniRule"/>
</dbReference>
<dbReference type="FunFam" id="3.30.1490.20:FF:000002">
    <property type="entry name" value="Succinate--CoA ligase [ADP-forming] subunit beta"/>
    <property type="match status" value="1"/>
</dbReference>
<dbReference type="FunFam" id="3.30.470.20:FF:000002">
    <property type="entry name" value="Succinate--CoA ligase [ADP-forming] subunit beta"/>
    <property type="match status" value="1"/>
</dbReference>
<dbReference type="FunFam" id="3.40.50.261:FF:000001">
    <property type="entry name" value="Succinate--CoA ligase [ADP-forming] subunit beta"/>
    <property type="match status" value="1"/>
</dbReference>
<dbReference type="Gene3D" id="3.30.1490.20">
    <property type="entry name" value="ATP-grasp fold, A domain"/>
    <property type="match status" value="1"/>
</dbReference>
<dbReference type="Gene3D" id="3.30.470.20">
    <property type="entry name" value="ATP-grasp fold, B domain"/>
    <property type="match status" value="1"/>
</dbReference>
<dbReference type="Gene3D" id="3.40.50.261">
    <property type="entry name" value="Succinyl-CoA synthetase domains"/>
    <property type="match status" value="1"/>
</dbReference>
<dbReference type="HAMAP" id="MF_00558">
    <property type="entry name" value="Succ_CoA_beta"/>
    <property type="match status" value="1"/>
</dbReference>
<dbReference type="InterPro" id="IPR011761">
    <property type="entry name" value="ATP-grasp"/>
</dbReference>
<dbReference type="InterPro" id="IPR013650">
    <property type="entry name" value="ATP-grasp_succ-CoA_synth-type"/>
</dbReference>
<dbReference type="InterPro" id="IPR013815">
    <property type="entry name" value="ATP_grasp_subdomain_1"/>
</dbReference>
<dbReference type="InterPro" id="IPR017866">
    <property type="entry name" value="Succ-CoA_synthase_bsu_CS"/>
</dbReference>
<dbReference type="InterPro" id="IPR005811">
    <property type="entry name" value="SUCC_ACL_C"/>
</dbReference>
<dbReference type="InterPro" id="IPR005809">
    <property type="entry name" value="Succ_CoA_ligase-like_bsu"/>
</dbReference>
<dbReference type="InterPro" id="IPR016102">
    <property type="entry name" value="Succinyl-CoA_synth-like"/>
</dbReference>
<dbReference type="NCBIfam" id="NF001913">
    <property type="entry name" value="PRK00696.1"/>
    <property type="match status" value="1"/>
</dbReference>
<dbReference type="NCBIfam" id="TIGR01016">
    <property type="entry name" value="sucCoAbeta"/>
    <property type="match status" value="1"/>
</dbReference>
<dbReference type="PANTHER" id="PTHR11815:SF10">
    <property type="entry name" value="SUCCINATE--COA LIGASE [GDP-FORMING] SUBUNIT BETA, MITOCHONDRIAL"/>
    <property type="match status" value="1"/>
</dbReference>
<dbReference type="PANTHER" id="PTHR11815">
    <property type="entry name" value="SUCCINYL-COA SYNTHETASE BETA CHAIN"/>
    <property type="match status" value="1"/>
</dbReference>
<dbReference type="Pfam" id="PF08442">
    <property type="entry name" value="ATP-grasp_2"/>
    <property type="match status" value="1"/>
</dbReference>
<dbReference type="Pfam" id="PF00549">
    <property type="entry name" value="Ligase_CoA"/>
    <property type="match status" value="1"/>
</dbReference>
<dbReference type="PIRSF" id="PIRSF001554">
    <property type="entry name" value="SucCS_beta"/>
    <property type="match status" value="1"/>
</dbReference>
<dbReference type="SUPFAM" id="SSF56059">
    <property type="entry name" value="Glutathione synthetase ATP-binding domain-like"/>
    <property type="match status" value="1"/>
</dbReference>
<dbReference type="SUPFAM" id="SSF52210">
    <property type="entry name" value="Succinyl-CoA synthetase domains"/>
    <property type="match status" value="1"/>
</dbReference>
<dbReference type="PROSITE" id="PS50975">
    <property type="entry name" value="ATP_GRASP"/>
    <property type="match status" value="1"/>
</dbReference>
<dbReference type="PROSITE" id="PS01217">
    <property type="entry name" value="SUCCINYL_COA_LIG_3"/>
    <property type="match status" value="1"/>
</dbReference>
<protein>
    <recommendedName>
        <fullName evidence="1">Succinate--CoA ligase [ADP-forming] subunit beta</fullName>
        <ecNumber evidence="1">6.2.1.5</ecNumber>
    </recommendedName>
    <alternativeName>
        <fullName evidence="1">Succinyl-CoA synthetase subunit beta</fullName>
        <shortName evidence="1">SCS-beta</shortName>
    </alternativeName>
</protein>
<organism>
    <name type="scientific">Acidovorax ebreus (strain TPSY)</name>
    <name type="common">Diaphorobacter sp. (strain TPSY)</name>
    <dbReference type="NCBI Taxonomy" id="535289"/>
    <lineage>
        <taxon>Bacteria</taxon>
        <taxon>Pseudomonadati</taxon>
        <taxon>Pseudomonadota</taxon>
        <taxon>Betaproteobacteria</taxon>
        <taxon>Burkholderiales</taxon>
        <taxon>Comamonadaceae</taxon>
        <taxon>Diaphorobacter</taxon>
    </lineage>
</organism>
<accession>B9MHW0</accession>
<keyword id="KW-0067">ATP-binding</keyword>
<keyword id="KW-0436">Ligase</keyword>
<keyword id="KW-0460">Magnesium</keyword>
<keyword id="KW-0479">Metal-binding</keyword>
<keyword id="KW-0547">Nucleotide-binding</keyword>
<keyword id="KW-1185">Reference proteome</keyword>
<keyword id="KW-0816">Tricarboxylic acid cycle</keyword>
<evidence type="ECO:0000255" key="1">
    <source>
        <dbReference type="HAMAP-Rule" id="MF_00558"/>
    </source>
</evidence>
<proteinExistence type="inferred from homology"/>